<name>PRMC_DICTD</name>
<protein>
    <recommendedName>
        <fullName evidence="1">Release factor glutamine methyltransferase</fullName>
        <shortName evidence="1">RF MTase</shortName>
        <ecNumber evidence="1">2.1.1.297</ecNumber>
    </recommendedName>
    <alternativeName>
        <fullName evidence="1">N5-glutamine methyltransferase PrmC</fullName>
    </alternativeName>
    <alternativeName>
        <fullName evidence="1">Protein-(glutamine-N5) MTase PrmC</fullName>
    </alternativeName>
    <alternativeName>
        <fullName evidence="1">Protein-glutamine N-methyltransferase PrmC</fullName>
    </alternativeName>
</protein>
<gene>
    <name evidence="1" type="primary">prmC</name>
    <name type="ordered locus">Dtur_0806</name>
</gene>
<sequence>MAQPLREVLVWLNNKIKEINPESAWLEAELLVAFVLNKDRAFIYTIDFLTDEEVEKLKKLLDLRKKGIPLNYIIEKKQFYDIELFVERGVLIPRSETEILIEVAKDTILKEGYKKIVEIGVGSGNISITLAKEFKDIKIYACDISPEAIKVARFNAKKHKVSDKIEFFFGFLLYPMVHRNVDFELIISNPPYIASWEFPFLQKEVKKEPWKALYGGWDGCEFYRKLFTLLKKRGKNFTAILEISPYIYHKVLNILKNFFDSVIIESFRDYLGHERVIKVIWH</sequence>
<dbReference type="EC" id="2.1.1.297" evidence="1"/>
<dbReference type="EMBL" id="CP001251">
    <property type="protein sequence ID" value="ACK42087.1"/>
    <property type="molecule type" value="Genomic_DNA"/>
</dbReference>
<dbReference type="RefSeq" id="YP_002352701.1">
    <property type="nucleotide sequence ID" value="NC_011661.1"/>
</dbReference>
<dbReference type="SMR" id="B8E004"/>
<dbReference type="FunCoup" id="B8E004">
    <property type="interactions" value="388"/>
</dbReference>
<dbReference type="STRING" id="515635.Dtur_0806"/>
<dbReference type="EnsemblBacteria" id="ACK42087">
    <property type="protein sequence ID" value="ACK42087"/>
    <property type="gene ID" value="Dtur_0806"/>
</dbReference>
<dbReference type="KEGG" id="dtu:Dtur_0806"/>
<dbReference type="PATRIC" id="fig|515635.4.peg.844"/>
<dbReference type="eggNOG" id="COG2890">
    <property type="taxonomic scope" value="Bacteria"/>
</dbReference>
<dbReference type="HOGENOM" id="CLU_018398_3_1_0"/>
<dbReference type="InParanoid" id="B8E004"/>
<dbReference type="OrthoDB" id="9800643at2"/>
<dbReference type="Proteomes" id="UP000007719">
    <property type="component" value="Chromosome"/>
</dbReference>
<dbReference type="GO" id="GO:0003676">
    <property type="term" value="F:nucleic acid binding"/>
    <property type="evidence" value="ECO:0007669"/>
    <property type="project" value="InterPro"/>
</dbReference>
<dbReference type="GO" id="GO:0102559">
    <property type="term" value="F:protein-(glutamine-N5) methyltransferase activity"/>
    <property type="evidence" value="ECO:0007669"/>
    <property type="project" value="UniProtKB-EC"/>
</dbReference>
<dbReference type="GO" id="GO:0036009">
    <property type="term" value="F:protein-glutamine N-methyltransferase activity"/>
    <property type="evidence" value="ECO:0000318"/>
    <property type="project" value="GO_Central"/>
</dbReference>
<dbReference type="GO" id="GO:0032259">
    <property type="term" value="P:methylation"/>
    <property type="evidence" value="ECO:0007669"/>
    <property type="project" value="UniProtKB-KW"/>
</dbReference>
<dbReference type="GO" id="GO:0006415">
    <property type="term" value="P:translational termination"/>
    <property type="evidence" value="ECO:0000318"/>
    <property type="project" value="GO_Central"/>
</dbReference>
<dbReference type="CDD" id="cd02440">
    <property type="entry name" value="AdoMet_MTases"/>
    <property type="match status" value="1"/>
</dbReference>
<dbReference type="Gene3D" id="1.10.8.10">
    <property type="entry name" value="DNA helicase RuvA subunit, C-terminal domain"/>
    <property type="match status" value="1"/>
</dbReference>
<dbReference type="Gene3D" id="3.40.50.150">
    <property type="entry name" value="Vaccinia Virus protein VP39"/>
    <property type="match status" value="1"/>
</dbReference>
<dbReference type="HAMAP" id="MF_02126">
    <property type="entry name" value="RF_methyltr_PrmC"/>
    <property type="match status" value="1"/>
</dbReference>
<dbReference type="InterPro" id="IPR002475">
    <property type="entry name" value="Bcl2-like"/>
</dbReference>
<dbReference type="InterPro" id="IPR002052">
    <property type="entry name" value="DNA_methylase_N6_adenine_CS"/>
</dbReference>
<dbReference type="InterPro" id="IPR004556">
    <property type="entry name" value="HemK-like"/>
</dbReference>
<dbReference type="InterPro" id="IPR050320">
    <property type="entry name" value="N5-glutamine_MTase"/>
</dbReference>
<dbReference type="InterPro" id="IPR040758">
    <property type="entry name" value="PrmC_N"/>
</dbReference>
<dbReference type="InterPro" id="IPR019874">
    <property type="entry name" value="RF_methyltr_PrmC"/>
</dbReference>
<dbReference type="InterPro" id="IPR029063">
    <property type="entry name" value="SAM-dependent_MTases_sf"/>
</dbReference>
<dbReference type="InterPro" id="IPR007848">
    <property type="entry name" value="Small_mtfrase_dom"/>
</dbReference>
<dbReference type="NCBIfam" id="TIGR00536">
    <property type="entry name" value="hemK_fam"/>
    <property type="match status" value="1"/>
</dbReference>
<dbReference type="NCBIfam" id="TIGR03534">
    <property type="entry name" value="RF_mod_PrmC"/>
    <property type="match status" value="1"/>
</dbReference>
<dbReference type="PANTHER" id="PTHR18895">
    <property type="entry name" value="HEMK METHYLTRANSFERASE"/>
    <property type="match status" value="1"/>
</dbReference>
<dbReference type="PANTHER" id="PTHR18895:SF74">
    <property type="entry name" value="MTRF1L RELEASE FACTOR GLUTAMINE METHYLTRANSFERASE"/>
    <property type="match status" value="1"/>
</dbReference>
<dbReference type="Pfam" id="PF05175">
    <property type="entry name" value="MTS"/>
    <property type="match status" value="1"/>
</dbReference>
<dbReference type="Pfam" id="PF17827">
    <property type="entry name" value="PrmC_N"/>
    <property type="match status" value="1"/>
</dbReference>
<dbReference type="SUPFAM" id="SSF53335">
    <property type="entry name" value="S-adenosyl-L-methionine-dependent methyltransferases"/>
    <property type="match status" value="1"/>
</dbReference>
<organism>
    <name type="scientific">Dictyoglomus turgidum (strain DSM 6724 / Z-1310)</name>
    <dbReference type="NCBI Taxonomy" id="515635"/>
    <lineage>
        <taxon>Bacteria</taxon>
        <taxon>Pseudomonadati</taxon>
        <taxon>Dictyoglomota</taxon>
        <taxon>Dictyoglomia</taxon>
        <taxon>Dictyoglomales</taxon>
        <taxon>Dictyoglomaceae</taxon>
        <taxon>Dictyoglomus</taxon>
    </lineage>
</organism>
<feature type="chain" id="PRO_0000414519" description="Release factor glutamine methyltransferase">
    <location>
        <begin position="1"/>
        <end position="282"/>
    </location>
</feature>
<feature type="binding site" evidence="1">
    <location>
        <begin position="120"/>
        <end position="124"/>
    </location>
    <ligand>
        <name>S-adenosyl-L-methionine</name>
        <dbReference type="ChEBI" id="CHEBI:59789"/>
    </ligand>
</feature>
<feature type="binding site" evidence="1">
    <location>
        <position position="143"/>
    </location>
    <ligand>
        <name>S-adenosyl-L-methionine</name>
        <dbReference type="ChEBI" id="CHEBI:59789"/>
    </ligand>
</feature>
<feature type="binding site" evidence="1">
    <location>
        <begin position="189"/>
        <end position="192"/>
    </location>
    <ligand>
        <name>substrate</name>
    </ligand>
</feature>
<feature type="binding site" evidence="1">
    <location>
        <position position="189"/>
    </location>
    <ligand>
        <name>S-adenosyl-L-methionine</name>
        <dbReference type="ChEBI" id="CHEBI:59789"/>
    </ligand>
</feature>
<accession>B8E004</accession>
<evidence type="ECO:0000255" key="1">
    <source>
        <dbReference type="HAMAP-Rule" id="MF_02126"/>
    </source>
</evidence>
<reference key="1">
    <citation type="journal article" date="2016" name="Front. Microbiol.">
        <title>The complete genome sequence of hyperthermophile Dictyoglomus turgidum DSM 6724 reveals a specialized carbohydrate fermentor.</title>
        <authorList>
            <person name="Brumm P.J."/>
            <person name="Gowda K."/>
            <person name="Robb F.T."/>
            <person name="Mead D.A."/>
        </authorList>
    </citation>
    <scope>NUCLEOTIDE SEQUENCE [LARGE SCALE GENOMIC DNA]</scope>
    <source>
        <strain>DSM 6724 / Z-1310</strain>
    </source>
</reference>
<comment type="function">
    <text evidence="1">Methylates the class 1 translation termination release factors RF1/PrfA and RF2/PrfB on the glutamine residue of the universally conserved GGQ motif.</text>
</comment>
<comment type="catalytic activity">
    <reaction evidence="1">
        <text>L-glutaminyl-[peptide chain release factor] + S-adenosyl-L-methionine = N(5)-methyl-L-glutaminyl-[peptide chain release factor] + S-adenosyl-L-homocysteine + H(+)</text>
        <dbReference type="Rhea" id="RHEA:42896"/>
        <dbReference type="Rhea" id="RHEA-COMP:10271"/>
        <dbReference type="Rhea" id="RHEA-COMP:10272"/>
        <dbReference type="ChEBI" id="CHEBI:15378"/>
        <dbReference type="ChEBI" id="CHEBI:30011"/>
        <dbReference type="ChEBI" id="CHEBI:57856"/>
        <dbReference type="ChEBI" id="CHEBI:59789"/>
        <dbReference type="ChEBI" id="CHEBI:61891"/>
        <dbReference type="EC" id="2.1.1.297"/>
    </reaction>
</comment>
<comment type="similarity">
    <text evidence="1">Belongs to the protein N5-glutamine methyltransferase family. PrmC subfamily.</text>
</comment>
<proteinExistence type="inferred from homology"/>
<keyword id="KW-0489">Methyltransferase</keyword>
<keyword id="KW-1185">Reference proteome</keyword>
<keyword id="KW-0949">S-adenosyl-L-methionine</keyword>
<keyword id="KW-0808">Transferase</keyword>